<gene>
    <name type="primary">NLRP3</name>
</gene>
<comment type="function">
    <text evidence="1 2">Sensor component of the NLRP3 inflammasome, which mediates inflammasome activation in response to defects in membrane integrity, leading to secretion of inflammatory cytokines IL1B and IL18 and pyroptosis. In response to pathogens and other damage-associated signals that affect the integrity of membranes, initiates the formation of the inflammasome polymeric complex composed of NLRP3, CASP1 and PYCARD/ASC. Recruitment of pro-caspase-1 (proCASP1) to the NLRP3 inflammasome promotes caspase-1 (CASP1) activation, which subsequently cleaves and activates inflammatory cytokines IL1B and IL18 and gasdermin-D (GSDMD), promoting cytokine secretion and pyroptosis. Activation of NLRP3 inflammasome is also required for HMGB1 secretion; stimulating inflammatory responses (By similarity). Under resting conditions, ADP-bound NLRP3 is autoinhibited (By similarity). NLRP3 activation stimuli include extracellular ATP, nigericin, reactive oxygen species, crystals of monosodium urate or cholesterol, amyloid-beta fibers, environmental or industrial particles and nanoparticles, such as asbestos, silica, aluminum salts, cytosolic dsRNA, etc. Almost all stimuli trigger intracellular K(+) efflux (By similarity). These stimuli lead to membrane perturbation and activation of NLRP3 (By similarity). Upon activation, NLRP3 is transported to microtubule organizing center (MTOC), where it is unlocked by NEK7, leading to its relocalization to dispersed trans-Golgi network (dTGN) vesicle membranes and formation of an active inflammasome complex. Associates with dTGN vesicle membranes by binding to phosphatidylinositol 4-phosphate (PtdIns4P). Shows ATPase activity (By similarity).</text>
</comment>
<comment type="function">
    <text evidence="1">Independently of inflammasome activation, regulates the differentiation of T helper 2 (Th2) cells and has a role in Th2 cell-dependent asthma and tumor growth. During Th2 differentiation, required for optimal IRF4 binding to IL4 promoter and for IRF4-dependent IL4 transcription. Binds to the consensus DNA sequence 5'-GRRGGNRGAG-3'. May also participate in the transcription of IL5, IL13, GATA3, CCR3, CCR4 and MAF.</text>
</comment>
<comment type="catalytic activity">
    <reaction evidence="1">
        <text>ATP + H2O = ADP + phosphate + H(+)</text>
        <dbReference type="Rhea" id="RHEA:13065"/>
        <dbReference type="ChEBI" id="CHEBI:15377"/>
        <dbReference type="ChEBI" id="CHEBI:15378"/>
        <dbReference type="ChEBI" id="CHEBI:30616"/>
        <dbReference type="ChEBI" id="CHEBI:43474"/>
        <dbReference type="ChEBI" id="CHEBI:456216"/>
    </reaction>
    <physiologicalReaction direction="left-to-right" evidence="1">
        <dbReference type="Rhea" id="RHEA:13066"/>
    </physiologicalReaction>
</comment>
<comment type="activity regulation">
    <text evidence="1 2">Under resting conditions, NLRP3 binds ADP and is autoinhibited (By similarity). Inactive NLRP3 forms homodecameric double-ring cages that hide pyrin domains within NACHT-LRR rings to avoid premature activation. NLRP3 activation stimuli include extracellular ATP, nigericin, reactive oxygen species, crystals of monosodium urate or cholesterol, amyloid-beta fibers, environmental or industrial particles and nanoparticles, such as asbestos, silica, aluminum salts, cytosolic dsRNA, etc. Almost all stimuli trigger intracellular K(+) efflux. These stimuli lead to membrane perturbations that induce activation of NLRP3. Upon activation, NLRP3 is transported to microtubule organizing center (MTOC), where it is unlocked by NEK7, leading to its relocalization to dispersed trans-Golgi network (dTGN) vesicle membranes and recruitment of PYCARD/ASC for the formation of an active inflammasome complex. NEK7-activated NLRP3 forms a disk-shaped inflammasome. NLRP3 and PYCARD/ASC interact via their respective pyrin domains; interaction initiates speck formation (nucleation) which greatly enhances further addition of soluble PYCARD/ASC molecules to the speck in a prion-like polymerization process (By similarity). Clustered PYCARD/ASC nucleates the formation of CASP1 filaments through the interaction of their respective CARD domains, acting as a platform for CASP1 polymerization and activation. Active CASP1 then processes IL1B and IL18 precursors, leading to the release of mature cytokines in the extracellular milieu and inflammatory response (By similarity). NLRP3 inflammasome assembly is inhibited by IRGM, which impedes NLRP3 oligomerization (By similarity). NLRP3 inflammasome is inhibited by cyclic AMP (cAMP), which directly binds NLRP3; inhibition is relieved by calcium-sensing receptor CASR, which inhibits production of cAMP (By similarity). Specifically inhibited by sulfonylurea MCC950 (also named CP-456,773, CRID3), a potent and specific small-molecule inhibitor of the NLRP3 inflammasome that acts by preventing ATP hydrolysis (By similarity).</text>
</comment>
<comment type="subunit">
    <text evidence="1 2">Sensor component of NLRP3 inflammasomes; inflammasomes are supramolecular complexes that assemble in the cytosol in response to pathogens and other damage-associated signals and play critical roles in innate immunity and inflammation. The core of NLRP3 inflammasomes consists of a signal sensor component (NLRP3), an adapter (PYCARD/ASC), which recruits an effector pro-inflammatory caspase (CASP1 and, possibly, CASP4 and CASP5). Homodecamer; inactive NLRP3 forms homodecameric double-ring cages that hide pyrin domains within NACHT-LRR rings to avoid premature activation. Interacts (via pyrin domain) with PYCARD/ASC (via pyrin domain); interaction is direct. Interacts (via LRR repeat domain) with NEK7 (via N-terminus); the interaction is required for the formation of the complex NLRP3:PYCARD, oligomerization of PYCARD/ASC and activation of CASP1 (By similarity). Interacts (via LRR repeat domain) with NR4A1/Nur77 (via N-terminus); the interaction is direct, requires activation of NR4A1 by its ligands NBRE-containing dsDNA and lipopolysaccharide, and stimulates the association of NLRP3 with NEK7 for non-canonical NLRP3 inflammasome activation (By similarity). Interacts with CARD8; leading to inhibit formation of the NLRP3 inflammasome. Interacts with MEFV; this interaction targets NLRP3 to degradation by autophagy, hence preventing excessive IL1B- and IL18-mediated inflammation (By similarity). Interacts with EIF2AK2/PKR; this interaction requires EIF2AK2 activity, is accompanied by EIF2AK2 autophosphorylation and promotes inflammasome assembly in response to specific stimuli (By similarity). Interacts with GBP5 (via DAPIN domain); this interaction promotes inflammasome assembly in response to microbial and soluble, but not crystalline, agents. Interacts with PML (isoform PML-1) (via the leucine-rich repeat (LRR) domain); PML-mediated increase in NLRP3 inflammasome activation does not depend upon this interaction. Interacts (via NACHT domain) with DHX33 (via DEAH box); NLRP3 activation in presence of cytosolic dsRNA is mediated by DHX33. Interacts (via NACHT and LRR domains) with ARRB2; this interaction is direct and inducible by polyunsaturated fatty acids (PUFAs). Interacts (via NACHT domain) with DDX3X under both LPS-primed and inflammasome-activating conditions. Interacts with IRF4 (via the LRR domain); this interaction is direct and is required for optimal IRF4 binding to IL4 promoter and efficient IL4 transactivation during differentiation of Th2 helper T-cells. Interacts with MAVS; promoting localization to mitochondria and activation of the NLRP3 inflammasome. Interacts with MARK4; promoting localization of NLRP3 to the microtubule organizing center (MTOC) (By similarity). Interacts with TRIM50; this interaction also promotes NLRP3 oligomerization and subsequent inflammasome activation (By similarity). Interacts with IRGM; preventing NLRP3 inflammasome assembly and promoting NLRP3 degradation (By similarity). Interacts (via KFERQ-like motifs) with HSPA8/HSC70; promoting NLRP3 degradation by the chaperone-mediated autophagy pathway (By similarity). Interacts (via NACHT and LLR domains) with ABHD8; this interaction is enhanced in the presence of NLRP3 inflammasome inducers, such as ATP, nigericin, silica, or alum. Interaction with ABHD8 leads the recruitment of ZDHHC12, hence facilitating NLRP3 palmitoylation and degradation by the chaperone-mediated autophagy pathway (CMA), therefore attenuating NLRP3 inflammasome activation (By similarity).</text>
</comment>
<comment type="subcellular location">
    <subcellularLocation>
        <location evidence="1">Cytoplasm</location>
        <location evidence="1">Cytosol</location>
    </subcellularLocation>
    <subcellularLocation>
        <location evidence="1">Inflammasome</location>
    </subcellularLocation>
    <subcellularLocation>
        <location evidence="1">Cytoplasm</location>
        <location evidence="1">Cytoskeleton</location>
        <location evidence="1">Microtubule organizing center</location>
    </subcellularLocation>
    <subcellularLocation>
        <location evidence="1">Golgi apparatus membrane</location>
    </subcellularLocation>
    <subcellularLocation>
        <location evidence="1">Endoplasmic reticulum</location>
    </subcellularLocation>
    <subcellularLocation>
        <location evidence="1">Mitochondrion</location>
    </subcellularLocation>
    <subcellularLocation>
        <location evidence="1">Secreted</location>
    </subcellularLocation>
    <subcellularLocation>
        <location evidence="1">Nucleus</location>
    </subcellularLocation>
    <text evidence="1">In macrophages, under resting conditions, mainly located in the cytosol and on membranes of various organelles, such as endoplasmic reticulum, mitochondria and Golgi: forms an inactive double-ring cage that is primarily localized on membranes. Upon activation, NLRP3 is transported to microtubule organizing center (MTOC), where it is unlocked by NEK7, leading to its relocalization to dispersed trans-Golgi network (dTGN) vesicle membranes for the formation of an active inflammasome complex. Recruited to dTGN vesicle membranes by binding to phosphatidylinositol 4-phosphate (PtdIns4P). After the induction of pyroptosis, inflammasome specks are released into the extracellular space where they can further promote IL1B processing and where they can be engulfed by macrophages. Phagocytosis induces lysosomal damage and inflammasome activation in the recipient cells. In the Th2 subset of CD4(+) helper T-cells, mainly located in the nucleus. Nuclear localization depends upon KPNA2. In the Th1 subset of CD4(+) helper T-cells, mainly cytoplasmic.</text>
</comment>
<comment type="tissue specificity">
    <text evidence="6">Highly expressed in oocyte, testis, spleen, thymus and kidney.</text>
</comment>
<comment type="domain">
    <text evidence="2">The pyrin domain (also called DAPIN domain or PYD) is involved in PYCARD/ASC-binding.</text>
</comment>
<comment type="domain">
    <text evidence="2">The FISNA domain is a critical mediator of NLRP3 conformational during NLRP3 activation. It becomes ordered in its key regions during activation to stabilize the active NACHT conformation and mediate most interactions in the NLRP3 disk.</text>
</comment>
<comment type="domain">
    <text evidence="1">The LRR domain mediates the interaction with IRF4, PML, NEK7 and NR4A1/Nur77.</text>
</comment>
<comment type="domain">
    <text evidence="2">The KFERQ-like motifs mediate binding to HSPA8/HSC70 following NLRP3 paylmitoylation by ZDHHC12.</text>
</comment>
<comment type="PTM">
    <text evidence="2">The disulfide bond in the pyrin domain might play a role in reactive oxygen species-mediated activation.</text>
</comment>
<comment type="PTM">
    <text evidence="1 2">Phosphorylation at Ser-198 by MAPK8/JNK1 increases inflammasome activation by promoting deubiquitination by BRCC3 and NLRP3 homooligomerization. Phosphorylation at Ser-805 by CSNK1A1 prevents inflammasome activation by preventing NEK7 recruitment. Phosphorylation at Ser-5 in the pyrin domain inhibits homomultimerization of NLRP3 and activation of the NLRP3 inflammasome: dephosphorylation by protein phosphatase 2A (PP2A) promotes assembly of the NLRP3 inflammasome (By similarity). Phosphorylation at Ser-295 by PKD/PRKD1 promotes NLRP3 inflammasome assembly (By similarity). Phosphorylation by ERK1/MAPK3 promotes NLRP3 inflammasome assembly. Phosphorylation by BTK (at Tyr-136, Tyr-140, Tyr-143 and Tyr-168) in the region that mediates binding to phosphatidylinositol phosphate, promotes relocalization of NLRP3 and assembly of the NLRP3 inflammasome. Phosphorylation at Tyr-860 inhibits NLRP3 inflammasome assembly: dephosphorylation by PTPN22 promotes inflammasome activation (By similarity). Phosphorylated by LATS1 and LATS2 at Ser-265 following palmitoylation by ZDHHC1, promoting its relocalization to the microtubule organizing center (MTOC), where NLRP3 is activated by NEK7, leading to inflammasome assembly and activation (By similarity).</text>
</comment>
<comment type="PTM">
    <text evidence="1 2">Ubiquitinated; undergoes both 'Lys-48'- and 'Lys-63'-linked polyubiquitination (By similarity). Ubiquitination does not lead to degradation, but inhibits inflammasome activation. Deubiquitination is catalyzed by BRCC3 and associated with NLRP3 activation and inflammasome assembly. This process can be induced by the activation of Toll-like receptors (by LPS), through a non-transcriptional pathway dependent on the mitochondrial production of reactive oxygen species, and by ATP (By similarity). Ubiquitinated by TRIM31 via 'Lys-48'-linked ubiquitination, leading to its degradation by the proteasome. Ubiquitinated at Lys-689 by the SCF(FBXL2) complex, leading to its degradation by the proteasome (By similarity). Ubiquitinated by TRIM35 via 'lys-48' and 'Lys-63'-linked ubiquitination leading to inhibition of NLRP3 inflammasome activation (By similarity). Undergoes 'Lys-27'-linked polyubiquitination by MARCHF5, leading to NLRP3-NEK7 complex formation and NLRP3 oligomerization (By similarity).</text>
</comment>
<comment type="PTM">
    <text evidence="2">Palmitoylation by ZDHHC12 promotes NLRP3 degradation by the chaperone-mediated autophagy pathway (CMA) and therefore limits NLRP3 inflammasome activation. Interaction with ZDHHC12, and hence NLRP3 palmitoylation, is greatly enhanced by ABHD8 (By similarity). Following palmitoylation, HSPA8/HSC70 recognizes and binds the KFERQ-like motifs on NLRP3 and promotes NLRP3 recruitment to lysosomes, where it is degraded via the chaperone-mediated autophagy pathway in a LAMP2-dependent process. Palmitoylation at Cys-836 and Cys-837 by ZDHHC5 enhances its binding to NEK7 leading to inflammasome assembly and activation. Palmitoylation at Cys-130 and Cys-957 by ZDHHC1 facilitates phosphorylation at Ser-265 by LATS1 and LATS2, promoting its relocalization to the microtubule organizing center (MTOC), where NLRP3 is activated by NEK7, leading to inflammasome assembly and activation. Depalmitoylated by ABHD17A.</text>
</comment>
<comment type="PTM">
    <text evidence="2">Degraded via selective autophagy following interaction with IRGM. IRGM promotes NLRP3 recruitment to autophagosome membranes, promoting its SQSTM1/p62-dependent autophagy-dependent degradation.</text>
</comment>
<comment type="similarity">
    <text evidence="7">Belongs to the NLRP family.</text>
</comment>
<dbReference type="EC" id="3.6.4.-" evidence="2"/>
<dbReference type="EMBL" id="EU344966">
    <property type="protein sequence ID" value="ABY58962.1"/>
    <property type="molecule type" value="mRNA"/>
</dbReference>
<dbReference type="RefSeq" id="NP_001107823.1">
    <property type="nucleotide sequence ID" value="NM_001114351.1"/>
</dbReference>
<dbReference type="RefSeq" id="XP_014983267.1">
    <property type="nucleotide sequence ID" value="XM_015127781.1"/>
</dbReference>
<dbReference type="SMR" id="B0FPE9"/>
<dbReference type="FunCoup" id="B0FPE9">
    <property type="interactions" value="1087"/>
</dbReference>
<dbReference type="STRING" id="9544.ENSMMUP00000053959"/>
<dbReference type="PaxDb" id="9544-ENSMMUP00000007829"/>
<dbReference type="GeneID" id="701278"/>
<dbReference type="KEGG" id="mcc:701278"/>
<dbReference type="CTD" id="114548"/>
<dbReference type="eggNOG" id="ENOG502SBIG">
    <property type="taxonomic scope" value="Eukaryota"/>
</dbReference>
<dbReference type="HOGENOM" id="CLU_002274_2_3_1"/>
<dbReference type="InParanoid" id="B0FPE9"/>
<dbReference type="OrthoDB" id="120976at2759"/>
<dbReference type="Proteomes" id="UP000006718">
    <property type="component" value="Unassembled WGS sequence"/>
</dbReference>
<dbReference type="GO" id="GO:0005737">
    <property type="term" value="C:cytoplasm"/>
    <property type="evidence" value="ECO:0000250"/>
    <property type="project" value="UniProtKB"/>
</dbReference>
<dbReference type="GO" id="GO:0005783">
    <property type="term" value="C:endoplasmic reticulum"/>
    <property type="evidence" value="ECO:0007669"/>
    <property type="project" value="UniProtKB-SubCell"/>
</dbReference>
<dbReference type="GO" id="GO:0005576">
    <property type="term" value="C:extracellular region"/>
    <property type="evidence" value="ECO:0007669"/>
    <property type="project" value="UniProtKB-SubCell"/>
</dbReference>
<dbReference type="GO" id="GO:0000139">
    <property type="term" value="C:Golgi membrane"/>
    <property type="evidence" value="ECO:0007669"/>
    <property type="project" value="UniProtKB-SubCell"/>
</dbReference>
<dbReference type="GO" id="GO:0031021">
    <property type="term" value="C:interphase microtubule organizing center"/>
    <property type="evidence" value="ECO:0000250"/>
    <property type="project" value="UniProtKB"/>
</dbReference>
<dbReference type="GO" id="GO:0016020">
    <property type="term" value="C:membrane"/>
    <property type="evidence" value="ECO:0000250"/>
    <property type="project" value="UniProtKB"/>
</dbReference>
<dbReference type="GO" id="GO:0005739">
    <property type="term" value="C:mitochondrion"/>
    <property type="evidence" value="ECO:0007669"/>
    <property type="project" value="UniProtKB-SubCell"/>
</dbReference>
<dbReference type="GO" id="GO:0072559">
    <property type="term" value="C:NLRP3 inflammasome complex"/>
    <property type="evidence" value="ECO:0000250"/>
    <property type="project" value="UniProtKB"/>
</dbReference>
<dbReference type="GO" id="GO:0005634">
    <property type="term" value="C:nucleus"/>
    <property type="evidence" value="ECO:0000250"/>
    <property type="project" value="UniProtKB"/>
</dbReference>
<dbReference type="GO" id="GO:0043531">
    <property type="term" value="F:ADP binding"/>
    <property type="evidence" value="ECO:0000250"/>
    <property type="project" value="UniProtKB"/>
</dbReference>
<dbReference type="GO" id="GO:0005524">
    <property type="term" value="F:ATP binding"/>
    <property type="evidence" value="ECO:0000250"/>
    <property type="project" value="UniProtKB"/>
</dbReference>
<dbReference type="GO" id="GO:0016887">
    <property type="term" value="F:ATP hydrolysis activity"/>
    <property type="evidence" value="ECO:0000250"/>
    <property type="project" value="UniProtKB"/>
</dbReference>
<dbReference type="GO" id="GO:0140297">
    <property type="term" value="F:DNA-binding transcription factor binding"/>
    <property type="evidence" value="ECO:0000250"/>
    <property type="project" value="UniProtKB"/>
</dbReference>
<dbReference type="GO" id="GO:0140299">
    <property type="term" value="F:molecular sensor activity"/>
    <property type="evidence" value="ECO:0000250"/>
    <property type="project" value="UniProtKB"/>
</dbReference>
<dbReference type="GO" id="GO:1901981">
    <property type="term" value="F:phosphatidylinositol phosphate binding"/>
    <property type="evidence" value="ECO:0000250"/>
    <property type="project" value="UniProtKB"/>
</dbReference>
<dbReference type="GO" id="GO:0070273">
    <property type="term" value="F:phosphatidylinositol-4-phosphate binding"/>
    <property type="evidence" value="ECO:0000250"/>
    <property type="project" value="UniProtKB"/>
</dbReference>
<dbReference type="GO" id="GO:0043565">
    <property type="term" value="F:sequence-specific DNA binding"/>
    <property type="evidence" value="ECO:0000250"/>
    <property type="project" value="UniProtKB"/>
</dbReference>
<dbReference type="GO" id="GO:0035591">
    <property type="term" value="F:signaling adaptor activity"/>
    <property type="evidence" value="ECO:0000250"/>
    <property type="project" value="UniProtKB"/>
</dbReference>
<dbReference type="GO" id="GO:0009595">
    <property type="term" value="P:detection of biotic stimulus"/>
    <property type="evidence" value="ECO:0000250"/>
    <property type="project" value="UniProtKB"/>
</dbReference>
<dbReference type="GO" id="GO:0006954">
    <property type="term" value="P:inflammatory response"/>
    <property type="evidence" value="ECO:0000250"/>
    <property type="project" value="UniProtKB"/>
</dbReference>
<dbReference type="GO" id="GO:0045087">
    <property type="term" value="P:innate immune response"/>
    <property type="evidence" value="ECO:0007669"/>
    <property type="project" value="UniProtKB-KW"/>
</dbReference>
<dbReference type="GO" id="GO:1901223">
    <property type="term" value="P:negative regulation of non-canonical NF-kappaB signal transduction"/>
    <property type="evidence" value="ECO:0000318"/>
    <property type="project" value="GO_Central"/>
</dbReference>
<dbReference type="GO" id="GO:0044546">
    <property type="term" value="P:NLRP3 inflammasome complex assembly"/>
    <property type="evidence" value="ECO:0000250"/>
    <property type="project" value="UniProtKB"/>
</dbReference>
<dbReference type="GO" id="GO:0050729">
    <property type="term" value="P:positive regulation of inflammatory response"/>
    <property type="evidence" value="ECO:0000250"/>
    <property type="project" value="UniProtKB"/>
</dbReference>
<dbReference type="GO" id="GO:0032731">
    <property type="term" value="P:positive regulation of interleukin-1 beta production"/>
    <property type="evidence" value="ECO:0000250"/>
    <property type="project" value="UniProtKB"/>
</dbReference>
<dbReference type="GO" id="GO:0032753">
    <property type="term" value="P:positive regulation of interleukin-4 production"/>
    <property type="evidence" value="ECO:0000250"/>
    <property type="project" value="UniProtKB"/>
</dbReference>
<dbReference type="GO" id="GO:2000553">
    <property type="term" value="P:positive regulation of T-helper 2 cell cytokine production"/>
    <property type="evidence" value="ECO:0000250"/>
    <property type="project" value="UniProtKB"/>
</dbReference>
<dbReference type="GO" id="GO:0045630">
    <property type="term" value="P:positive regulation of T-helper 2 cell differentiation"/>
    <property type="evidence" value="ECO:0000250"/>
    <property type="project" value="UniProtKB"/>
</dbReference>
<dbReference type="GO" id="GO:0045944">
    <property type="term" value="P:positive regulation of transcription by RNA polymerase II"/>
    <property type="evidence" value="ECO:0000250"/>
    <property type="project" value="UniProtKB"/>
</dbReference>
<dbReference type="GO" id="GO:0002830">
    <property type="term" value="P:positive regulation of type 2 immune response"/>
    <property type="evidence" value="ECO:0000250"/>
    <property type="project" value="UniProtKB"/>
</dbReference>
<dbReference type="GO" id="GO:0051260">
    <property type="term" value="P:protein homooligomerization"/>
    <property type="evidence" value="ECO:0000250"/>
    <property type="project" value="UniProtKB"/>
</dbReference>
<dbReference type="GO" id="GO:0050727">
    <property type="term" value="P:regulation of inflammatory response"/>
    <property type="evidence" value="ECO:0000318"/>
    <property type="project" value="GO_Central"/>
</dbReference>
<dbReference type="CDD" id="cd00116">
    <property type="entry name" value="LRR_RI"/>
    <property type="match status" value="1"/>
</dbReference>
<dbReference type="CDD" id="cd08320">
    <property type="entry name" value="Pyrin_NALPs"/>
    <property type="match status" value="1"/>
</dbReference>
<dbReference type="FunFam" id="1.10.533.10:FF:000019">
    <property type="entry name" value="NACHT, LRR and PYD domains-containing protein 3"/>
    <property type="match status" value="1"/>
</dbReference>
<dbReference type="FunFam" id="3.40.50.300:FF:000442">
    <property type="entry name" value="NACHT, LRR and PYD domains-containing protein 3"/>
    <property type="match status" value="1"/>
</dbReference>
<dbReference type="FunFam" id="3.80.10.10:FF:000360">
    <property type="entry name" value="NACHT, LRR and PYD domains-containing protein 3"/>
    <property type="match status" value="1"/>
</dbReference>
<dbReference type="Gene3D" id="1.10.533.10">
    <property type="entry name" value="Death Domain, Fas"/>
    <property type="match status" value="1"/>
</dbReference>
<dbReference type="Gene3D" id="3.40.50.300">
    <property type="entry name" value="P-loop containing nucleotide triphosphate hydrolases"/>
    <property type="match status" value="1"/>
</dbReference>
<dbReference type="Gene3D" id="3.80.10.10">
    <property type="entry name" value="Ribonuclease Inhibitor"/>
    <property type="match status" value="1"/>
</dbReference>
<dbReference type="InterPro" id="IPR004020">
    <property type="entry name" value="DAPIN"/>
</dbReference>
<dbReference type="InterPro" id="IPR011029">
    <property type="entry name" value="DEATH-like_dom_sf"/>
</dbReference>
<dbReference type="InterPro" id="IPR001611">
    <property type="entry name" value="Leu-rich_rpt"/>
</dbReference>
<dbReference type="InterPro" id="IPR032675">
    <property type="entry name" value="LRR_dom_sf"/>
</dbReference>
<dbReference type="InterPro" id="IPR029495">
    <property type="entry name" value="NACHT-assoc"/>
</dbReference>
<dbReference type="InterPro" id="IPR007111">
    <property type="entry name" value="NACHT_NTPase"/>
</dbReference>
<dbReference type="InterPro" id="IPR041267">
    <property type="entry name" value="NLRP_HD2"/>
</dbReference>
<dbReference type="InterPro" id="IPR050637">
    <property type="entry name" value="NLRP_innate_immun_reg"/>
</dbReference>
<dbReference type="InterPro" id="IPR041075">
    <property type="entry name" value="NOD1/2_WH"/>
</dbReference>
<dbReference type="InterPro" id="IPR027417">
    <property type="entry name" value="P-loop_NTPase"/>
</dbReference>
<dbReference type="PANTHER" id="PTHR45690">
    <property type="entry name" value="NACHT, LRR AND PYD DOMAINS-CONTAINING PROTEIN 12"/>
    <property type="match status" value="1"/>
</dbReference>
<dbReference type="PANTHER" id="PTHR45690:SF19">
    <property type="entry name" value="NACHT, LRR AND PYD DOMAINS-CONTAINING PROTEIN 3"/>
    <property type="match status" value="1"/>
</dbReference>
<dbReference type="Pfam" id="PF14484">
    <property type="entry name" value="FISNA"/>
    <property type="match status" value="1"/>
</dbReference>
<dbReference type="Pfam" id="PF13516">
    <property type="entry name" value="LRR_6"/>
    <property type="match status" value="5"/>
</dbReference>
<dbReference type="Pfam" id="PF05729">
    <property type="entry name" value="NACHT"/>
    <property type="match status" value="1"/>
</dbReference>
<dbReference type="Pfam" id="PF17776">
    <property type="entry name" value="NLRC4_HD2"/>
    <property type="match status" value="1"/>
</dbReference>
<dbReference type="Pfam" id="PF17779">
    <property type="entry name" value="NOD2_WH"/>
    <property type="match status" value="1"/>
</dbReference>
<dbReference type="Pfam" id="PF02758">
    <property type="entry name" value="PYRIN"/>
    <property type="match status" value="1"/>
</dbReference>
<dbReference type="SMART" id="SM01288">
    <property type="entry name" value="FISNA"/>
    <property type="match status" value="1"/>
</dbReference>
<dbReference type="SMART" id="SM00368">
    <property type="entry name" value="LRR_RI"/>
    <property type="match status" value="9"/>
</dbReference>
<dbReference type="SMART" id="SM01289">
    <property type="entry name" value="PYRIN"/>
    <property type="match status" value="1"/>
</dbReference>
<dbReference type="SUPFAM" id="SSF47986">
    <property type="entry name" value="DEATH domain"/>
    <property type="match status" value="1"/>
</dbReference>
<dbReference type="SUPFAM" id="SSF52540">
    <property type="entry name" value="P-loop containing nucleoside triphosphate hydrolases"/>
    <property type="match status" value="1"/>
</dbReference>
<dbReference type="SUPFAM" id="SSF52047">
    <property type="entry name" value="RNI-like"/>
    <property type="match status" value="1"/>
</dbReference>
<dbReference type="PROSITE" id="PS50824">
    <property type="entry name" value="DAPIN"/>
    <property type="match status" value="1"/>
</dbReference>
<dbReference type="PROSITE" id="PS50837">
    <property type="entry name" value="NACHT"/>
    <property type="match status" value="1"/>
</dbReference>
<keyword id="KW-0010">Activator</keyword>
<keyword id="KW-1008">Amyloidosis</keyword>
<keyword id="KW-0067">ATP-binding</keyword>
<keyword id="KW-0963">Cytoplasm</keyword>
<keyword id="KW-0206">Cytoskeleton</keyword>
<keyword id="KW-1015">Disulfide bond</keyword>
<keyword id="KW-0256">Endoplasmic reticulum</keyword>
<keyword id="KW-0333">Golgi apparatus</keyword>
<keyword id="KW-0378">Hydrolase</keyword>
<keyword id="KW-0391">Immunity</keyword>
<keyword id="KW-1271">Inflammasome</keyword>
<keyword id="KW-0395">Inflammatory response</keyword>
<keyword id="KW-0399">Innate immunity</keyword>
<keyword id="KW-1017">Isopeptide bond</keyword>
<keyword id="KW-0433">Leucine-rich repeat</keyword>
<keyword id="KW-0449">Lipoprotein</keyword>
<keyword id="KW-0472">Membrane</keyword>
<keyword id="KW-0496">Mitochondrion</keyword>
<keyword id="KW-0547">Nucleotide-binding</keyword>
<keyword id="KW-0539">Nucleus</keyword>
<keyword id="KW-0564">Palmitate</keyword>
<keyword id="KW-0597">Phosphoprotein</keyword>
<keyword id="KW-1185">Reference proteome</keyword>
<keyword id="KW-0677">Repeat</keyword>
<keyword id="KW-0964">Secreted</keyword>
<keyword id="KW-0804">Transcription</keyword>
<keyword id="KW-0805">Transcription regulation</keyword>
<keyword id="KW-0832">Ubl conjugation</keyword>
<reference key="1">
    <citation type="journal article" date="2009" name="Mol. Reprod. Dev.">
        <title>Identification of oocyte-selective NLRP genes in rhesus macaque monkeys (Macaca mulatta).</title>
        <authorList>
            <person name="McDaniel P."/>
            <person name="Wu X."/>
        </authorList>
    </citation>
    <scope>NUCLEOTIDE SEQUENCE [MRNA]</scope>
    <scope>TISSUE SPECIFICITY</scope>
    <source>
        <tissue>Oocyte</tissue>
    </source>
</reference>
<feature type="chain" id="PRO_0000387569" description="NACHT, LRR and PYD domains-containing protein 3">
    <location>
        <begin position="1"/>
        <end position="1035"/>
    </location>
</feature>
<feature type="domain" description="Pyrin" evidence="4">
    <location>
        <begin position="1"/>
        <end position="93"/>
    </location>
</feature>
<feature type="domain" description="FISNA" evidence="3">
    <location>
        <begin position="140"/>
        <end position="210"/>
    </location>
</feature>
<feature type="domain" description="NACHT" evidence="5">
    <location>
        <begin position="220"/>
        <end position="536"/>
    </location>
</feature>
<feature type="repeat" description="LRR 1">
    <location>
        <begin position="741"/>
        <end position="761"/>
    </location>
</feature>
<feature type="repeat" description="LRR 2">
    <location>
        <begin position="770"/>
        <end position="791"/>
    </location>
</feature>
<feature type="repeat" description="LRR 3">
    <location>
        <begin position="798"/>
        <end position="818"/>
    </location>
</feature>
<feature type="repeat" description="LRR 4">
    <location>
        <begin position="827"/>
        <end position="848"/>
    </location>
</feature>
<feature type="repeat" description="LRR 5">
    <location>
        <begin position="855"/>
        <end position="875"/>
    </location>
</feature>
<feature type="repeat" description="LRR 6">
    <location>
        <begin position="884"/>
        <end position="905"/>
    </location>
</feature>
<feature type="repeat" description="LRR 7">
    <location>
        <begin position="912"/>
        <end position="932"/>
    </location>
</feature>
<feature type="repeat" description="LRR 8">
    <location>
        <begin position="941"/>
        <end position="962"/>
    </location>
</feature>
<feature type="repeat" description="LRR 9">
    <location>
        <begin position="969"/>
        <end position="990"/>
    </location>
</feature>
<feature type="region of interest" description="Required for binding to phosphatidylinositol 4-phosphate (PtdIns4P)" evidence="1">
    <location>
        <begin position="131"/>
        <end position="134"/>
    </location>
</feature>
<feature type="short sequence motif" description="KFERQ-like motif 1" evidence="2">
    <location>
        <begin position="355"/>
        <end position="359"/>
    </location>
</feature>
<feature type="short sequence motif" description="KFERQ-like motif 2" evidence="2">
    <location>
        <begin position="603"/>
        <end position="607"/>
    </location>
</feature>
<feature type="short sequence motif" description="KFERQ-like motif 3" evidence="2">
    <location>
        <begin position="797"/>
        <end position="801"/>
    </location>
</feature>
<feature type="short sequence motif" description="KFERQ-like motif 4" evidence="2">
    <location>
        <begin position="990"/>
        <end position="994"/>
    </location>
</feature>
<feature type="binding site" evidence="2">
    <location>
        <position position="169"/>
    </location>
    <ligand>
        <name>ATP</name>
        <dbReference type="ChEBI" id="CHEBI:30616"/>
    </ligand>
</feature>
<feature type="binding site" evidence="5">
    <location>
        <begin position="226"/>
        <end position="233"/>
    </location>
    <ligand>
        <name>ATP</name>
        <dbReference type="ChEBI" id="CHEBI:30616"/>
    </ligand>
</feature>
<feature type="binding site" evidence="2">
    <location>
        <position position="522"/>
    </location>
    <ligand>
        <name>ATP</name>
        <dbReference type="ChEBI" id="CHEBI:30616"/>
    </ligand>
</feature>
<feature type="modified residue" description="Phosphoserine" evidence="1">
    <location>
        <position position="5"/>
    </location>
</feature>
<feature type="modified residue" description="Phosphotyrosine" evidence="2">
    <location>
        <position position="13"/>
    </location>
</feature>
<feature type="modified residue" description="Phosphotyrosine" evidence="2">
    <location>
        <position position="136"/>
    </location>
</feature>
<feature type="modified residue" description="Phosphotyrosine" evidence="2">
    <location>
        <position position="140"/>
    </location>
</feature>
<feature type="modified residue" description="Phosphotyrosine" evidence="2">
    <location>
        <position position="143"/>
    </location>
</feature>
<feature type="modified residue" description="Phosphoserine" evidence="1">
    <location>
        <position position="161"/>
    </location>
</feature>
<feature type="modified residue" description="Phosphoserine" evidence="2">
    <location>
        <position position="163"/>
    </location>
</feature>
<feature type="modified residue" description="Phosphotyrosine" evidence="2">
    <location>
        <position position="168"/>
    </location>
</feature>
<feature type="modified residue" description="Phosphoserine" evidence="2">
    <location>
        <position position="198"/>
    </location>
</feature>
<feature type="modified residue" description="Phosphoserine" evidence="2">
    <location>
        <position position="201"/>
    </location>
</feature>
<feature type="modified residue" description="Phosphoserine" evidence="2">
    <location>
        <position position="265"/>
    </location>
</feature>
<feature type="modified residue" description="Phosphoserine" evidence="1">
    <location>
        <position position="295"/>
    </location>
</feature>
<feature type="modified residue" description="Phosphoserine" evidence="2">
    <location>
        <position position="334"/>
    </location>
</feature>
<feature type="modified residue" description="Phosphoserine" evidence="2">
    <location>
        <position position="727"/>
    </location>
</feature>
<feature type="modified residue" description="Phosphoserine" evidence="2">
    <location>
        <position position="734"/>
    </location>
</feature>
<feature type="modified residue" description="Phosphoserine" evidence="2">
    <location>
        <position position="805"/>
    </location>
</feature>
<feature type="modified residue" description="Phosphotyrosine" evidence="2">
    <location>
        <position position="860"/>
    </location>
</feature>
<feature type="modified residue" description="Phosphoserine" evidence="2">
    <location>
        <position position="974"/>
    </location>
</feature>
<feature type="modified residue" description="Phosphoserine" evidence="2">
    <location>
        <position position="1034"/>
    </location>
</feature>
<feature type="lipid moiety-binding region" description="S-palmitoyl cysteine" evidence="2">
    <location>
        <position position="130"/>
    </location>
</feature>
<feature type="lipid moiety-binding region" description="S-palmitoyl cysteine" evidence="2">
    <location>
        <position position="836"/>
    </location>
</feature>
<feature type="lipid moiety-binding region" description="S-palmitoyl cysteine" evidence="2">
    <location>
        <position position="837"/>
    </location>
</feature>
<feature type="lipid moiety-binding region" description="S-palmitoyl cysteine" evidence="2">
    <location>
        <position position="843"/>
    </location>
</feature>
<feature type="lipid moiety-binding region" description="S-palmitoyl cysteine" evidence="2">
    <location>
        <position position="957"/>
    </location>
</feature>
<feature type="disulfide bond" description="Redox-active" evidence="2">
    <location>
        <begin position="8"/>
        <end position="108"/>
    </location>
</feature>
<feature type="cross-link" description="Glycyl lysine isopeptide (Lys-Gly) (interchain with G-Cter in ubiquitin)" evidence="2">
    <location>
        <position position="324"/>
    </location>
</feature>
<feature type="cross-link" description="Glycyl lysine isopeptide (Lys-Gly) (interchain with G-Cter in ubiquitin)" evidence="2">
    <location>
        <position position="430"/>
    </location>
</feature>
<feature type="cross-link" description="Glycyl lysine isopeptide (Lys-Gly) (interchain with G-Cter in ubiquitin)" evidence="2">
    <location>
        <position position="689"/>
    </location>
</feature>
<feature type="cross-link" description="Glycyl lysine isopeptide (Lys-Gly) (interchain with G-Cter in ubiquitin)" evidence="2">
    <location>
        <position position="877"/>
    </location>
</feature>
<feature type="cross-link" description="Glycyl lysine isopeptide (Lys-Gly) (interchain with G-Cter in ubiquitin)" evidence="2">
    <location>
        <position position="926"/>
    </location>
</feature>
<feature type="cross-link" description="Glycyl lysine isopeptide (Lys-Gly) (interchain with G-Cter in ubiquitin)" evidence="2">
    <location>
        <position position="972"/>
    </location>
</feature>
<sequence>MKMASTRCKLARYLEDLEDVDLKKFKMHLEDYPPQKGCISLPRGQTEKADHVDLATLMIDFNGEEKAWAMAVWIFAAINRRDLYEKAKRDEPKWGSDNARVSNPTVICQEDSIEEEWMGLLEYLSRISICKKKKDYCKKYRKYVRSRFQCIEDRNARLGESVSLNKRYTRLRLIKEHRSQQEREHELLAIGKTKTWESPVSPIKMELLFDPDDEHSEPVHTVVFQGAAGIGKTILARKIMLDWASGTLYQDRFDYLFYIHCREVSLVTQRSLGDLIMSCCPDPNPPIRKIVSKPSRILFLMDGFDELQGAFDEHIGPLCTDWQKAERGDILLSSLIRKKLLPEASLLITTRPVALEKLQHLLDHPRHVEILGFSEAKRKEYFFKYFSDEAQARAAFSLIQENEVLFTMCFIPLVCWIVCTGLKQQMESGKSLAQTSKTTTAVYTFFLSSLLQPRGGSQEHRLCAHLWGLCSLAADGIWNQKILFEESDLRNHGLQKADVSAFLRMNLFQKEVDCEKFYSFIHMTFQEFFAAMYYLLEEEKEGRTNVPGSCLKLPSRDVTVLLENYGKFEKGYLIFVVRFLFGLVNQERTCYLEKKLSCKISQQIRLELLKWIEVKAKAKKLQIQPSQLELFYCLYEMQEEDFVQRAMDYFPKIEINLSTRMDHVVSSFCIENCHRVESLSLGFLHNMPKEEEEEEKEGRHLDMVQCVLPGSHAACSHRLVNSHLTSSFCRGLFSVLSTSQSLTELDLSDNSLGDPGMRVLCETLQHPDCNIRRLWLGRCGLSHECCFDISLVLSSNQKLVELDLSDNALGDFGIRLLCVGLKHLLCNLKKLWLVSCCLTSACCQDLASVLSTSRSLTRLYVGENALGDAGVAILCEKAKNPQCNLQKLGLVNSGLTSACCSALSSVLSTNQNLTHLYLRGNTLGDKGIKLLCEGLLHPDCKLQVLELDNCNLTSHCCWDLSTLLTSSQSLRKLSLGNNDLGDLGVMMFCEVLKQQSCLLQNLGLSEMYFNYETKSALETLQEEKPELTIVFEPSW</sequence>
<evidence type="ECO:0000250" key="1">
    <source>
        <dbReference type="UniProtKB" id="Q8R4B8"/>
    </source>
</evidence>
<evidence type="ECO:0000250" key="2">
    <source>
        <dbReference type="UniProtKB" id="Q96P20"/>
    </source>
</evidence>
<evidence type="ECO:0000255" key="3"/>
<evidence type="ECO:0000255" key="4">
    <source>
        <dbReference type="PROSITE-ProRule" id="PRU00061"/>
    </source>
</evidence>
<evidence type="ECO:0000255" key="5">
    <source>
        <dbReference type="PROSITE-ProRule" id="PRU00136"/>
    </source>
</evidence>
<evidence type="ECO:0000269" key="6">
    <source>
    </source>
</evidence>
<evidence type="ECO:0000305" key="7"/>
<organism>
    <name type="scientific">Macaca mulatta</name>
    <name type="common">Rhesus macaque</name>
    <dbReference type="NCBI Taxonomy" id="9544"/>
    <lineage>
        <taxon>Eukaryota</taxon>
        <taxon>Metazoa</taxon>
        <taxon>Chordata</taxon>
        <taxon>Craniata</taxon>
        <taxon>Vertebrata</taxon>
        <taxon>Euteleostomi</taxon>
        <taxon>Mammalia</taxon>
        <taxon>Eutheria</taxon>
        <taxon>Euarchontoglires</taxon>
        <taxon>Primates</taxon>
        <taxon>Haplorrhini</taxon>
        <taxon>Catarrhini</taxon>
        <taxon>Cercopithecidae</taxon>
        <taxon>Cercopithecinae</taxon>
        <taxon>Macaca</taxon>
    </lineage>
</organism>
<proteinExistence type="evidence at transcript level"/>
<name>NLRP3_MACMU</name>
<protein>
    <recommendedName>
        <fullName>NACHT, LRR and PYD domains-containing protein 3</fullName>
        <ecNumber evidence="2">3.6.4.-</ecNumber>
    </recommendedName>
</protein>
<accession>B0FPE9</accession>